<comment type="function">
    <text evidence="1">Produces ATP from ADP in the presence of a proton gradient across the membrane. The catalytic sites are hosted primarily by the beta subunits.</text>
</comment>
<comment type="catalytic activity">
    <reaction evidence="1">
        <text>ATP + H2O + 4 H(+)(in) = ADP + phosphate + 5 H(+)(out)</text>
        <dbReference type="Rhea" id="RHEA:57720"/>
        <dbReference type="ChEBI" id="CHEBI:15377"/>
        <dbReference type="ChEBI" id="CHEBI:15378"/>
        <dbReference type="ChEBI" id="CHEBI:30616"/>
        <dbReference type="ChEBI" id="CHEBI:43474"/>
        <dbReference type="ChEBI" id="CHEBI:456216"/>
        <dbReference type="EC" id="7.1.2.2"/>
    </reaction>
</comment>
<comment type="subunit">
    <text evidence="1">F-type ATPases have 2 components, CF(1) - the catalytic core - and CF(0) - the membrane proton channel. CF(1) has five subunits: alpha(3), beta(3), gamma(1), delta(1), epsilon(1). CF(0) has three main subunits: a(1), b(2) and c(9-12). The alpha and beta chains form an alternating ring which encloses part of the gamma chain. CF(1) is attached to CF(0) by a central stalk formed by the gamma and epsilon chains, while a peripheral stalk is formed by the delta and b chains.</text>
</comment>
<comment type="subcellular location">
    <subcellularLocation>
        <location evidence="1">Cell inner membrane</location>
        <topology evidence="1">Peripheral membrane protein</topology>
    </subcellularLocation>
</comment>
<comment type="similarity">
    <text evidence="1">Belongs to the ATPase alpha/beta chains family.</text>
</comment>
<protein>
    <recommendedName>
        <fullName evidence="1">ATP synthase subunit beta</fullName>
        <ecNumber evidence="1">7.1.2.2</ecNumber>
    </recommendedName>
    <alternativeName>
        <fullName evidence="1">ATP synthase F1 sector subunit beta</fullName>
    </alternativeName>
    <alternativeName>
        <fullName evidence="1">F-ATPase subunit beta</fullName>
    </alternativeName>
</protein>
<sequence>MSQGSIVQCIGAVVDIHFPRDAMPKVYDALKLDASEANGMAEDGLTFEVQQQLGDGVVRTIAMGSSDGLRRGMKVNNTGAGISVPVGMGTLGRIMDVLGRPIDEAGPIDSTELRVIHQPAPKFDELSSSVDLLETGIKVIDLICPFAKGGKVGLFGGAGVGKTVNMMELINNIAKQHAGLSVFAGVGERTREGNDFYHEMKDSNVLDKVAMVFGQMNEPPGNRLRVALTGLTMAERFRDDGRDILFFVDNIYRYTLAGTEVSALLGRMPSAVGYQPTLAEEMGRLQERITSTKVGSITSIQAVYVPADDLTDPSPATTFLHLDSTVVLSRDIASLGIYPAVDPLDSTSRQLDPQVVGEEHYSVARAVQMNLQRYKELRDIIAILGMDELSPEDKLAVSRARKIQRFLSQPFHVAEVFTGSPGKFVSLKETIKGFKGICAGEYDHLPEQAFYMVGGIEEVIEKAKTL</sequence>
<keyword id="KW-0066">ATP synthesis</keyword>
<keyword id="KW-0067">ATP-binding</keyword>
<keyword id="KW-0997">Cell inner membrane</keyword>
<keyword id="KW-1003">Cell membrane</keyword>
<keyword id="KW-0139">CF(1)</keyword>
<keyword id="KW-0375">Hydrogen ion transport</keyword>
<keyword id="KW-0406">Ion transport</keyword>
<keyword id="KW-0472">Membrane</keyword>
<keyword id="KW-0547">Nucleotide-binding</keyword>
<keyword id="KW-1278">Translocase</keyword>
<keyword id="KW-0813">Transport</keyword>
<organism>
    <name type="scientific">Dechloromonas aromatica (strain RCB)</name>
    <dbReference type="NCBI Taxonomy" id="159087"/>
    <lineage>
        <taxon>Bacteria</taxon>
        <taxon>Pseudomonadati</taxon>
        <taxon>Pseudomonadota</taxon>
        <taxon>Betaproteobacteria</taxon>
        <taxon>Rhodocyclales</taxon>
        <taxon>Azonexaceae</taxon>
        <taxon>Dechloromonas</taxon>
    </lineage>
</organism>
<name>ATPB_DECAR</name>
<feature type="chain" id="PRO_0000254248" description="ATP synthase subunit beta">
    <location>
        <begin position="1"/>
        <end position="466"/>
    </location>
</feature>
<feature type="binding site" evidence="1">
    <location>
        <begin position="156"/>
        <end position="163"/>
    </location>
    <ligand>
        <name>ATP</name>
        <dbReference type="ChEBI" id="CHEBI:30616"/>
    </ligand>
</feature>
<proteinExistence type="inferred from homology"/>
<dbReference type="EC" id="7.1.2.2" evidence="1"/>
<dbReference type="EMBL" id="CP000089">
    <property type="protein sequence ID" value="AAZ48840.1"/>
    <property type="molecule type" value="Genomic_DNA"/>
</dbReference>
<dbReference type="SMR" id="Q477Z1"/>
<dbReference type="STRING" id="159087.Daro_4114"/>
<dbReference type="KEGG" id="dar:Daro_4114"/>
<dbReference type="eggNOG" id="COG0055">
    <property type="taxonomic scope" value="Bacteria"/>
</dbReference>
<dbReference type="HOGENOM" id="CLU_022398_0_2_4"/>
<dbReference type="OrthoDB" id="9801639at2"/>
<dbReference type="GO" id="GO:0005886">
    <property type="term" value="C:plasma membrane"/>
    <property type="evidence" value="ECO:0007669"/>
    <property type="project" value="UniProtKB-SubCell"/>
</dbReference>
<dbReference type="GO" id="GO:0045259">
    <property type="term" value="C:proton-transporting ATP synthase complex"/>
    <property type="evidence" value="ECO:0007669"/>
    <property type="project" value="UniProtKB-KW"/>
</dbReference>
<dbReference type="GO" id="GO:0005524">
    <property type="term" value="F:ATP binding"/>
    <property type="evidence" value="ECO:0007669"/>
    <property type="project" value="UniProtKB-UniRule"/>
</dbReference>
<dbReference type="GO" id="GO:0016887">
    <property type="term" value="F:ATP hydrolysis activity"/>
    <property type="evidence" value="ECO:0007669"/>
    <property type="project" value="InterPro"/>
</dbReference>
<dbReference type="GO" id="GO:0046933">
    <property type="term" value="F:proton-transporting ATP synthase activity, rotational mechanism"/>
    <property type="evidence" value="ECO:0007669"/>
    <property type="project" value="UniProtKB-UniRule"/>
</dbReference>
<dbReference type="CDD" id="cd18110">
    <property type="entry name" value="ATP-synt_F1_beta_C"/>
    <property type="match status" value="1"/>
</dbReference>
<dbReference type="CDD" id="cd18115">
    <property type="entry name" value="ATP-synt_F1_beta_N"/>
    <property type="match status" value="1"/>
</dbReference>
<dbReference type="CDD" id="cd01133">
    <property type="entry name" value="F1-ATPase_beta_CD"/>
    <property type="match status" value="1"/>
</dbReference>
<dbReference type="FunFam" id="1.10.1140.10:FF:000001">
    <property type="entry name" value="ATP synthase subunit beta"/>
    <property type="match status" value="1"/>
</dbReference>
<dbReference type="FunFam" id="3.40.50.300:FF:000004">
    <property type="entry name" value="ATP synthase subunit beta"/>
    <property type="match status" value="1"/>
</dbReference>
<dbReference type="Gene3D" id="2.40.10.170">
    <property type="match status" value="1"/>
</dbReference>
<dbReference type="Gene3D" id="1.10.1140.10">
    <property type="entry name" value="Bovine Mitochondrial F1-atpase, Atp Synthase Beta Chain, Chain D, domain 3"/>
    <property type="match status" value="1"/>
</dbReference>
<dbReference type="Gene3D" id="3.40.50.300">
    <property type="entry name" value="P-loop containing nucleotide triphosphate hydrolases"/>
    <property type="match status" value="1"/>
</dbReference>
<dbReference type="HAMAP" id="MF_01347">
    <property type="entry name" value="ATP_synth_beta_bact"/>
    <property type="match status" value="1"/>
</dbReference>
<dbReference type="InterPro" id="IPR003593">
    <property type="entry name" value="AAA+_ATPase"/>
</dbReference>
<dbReference type="InterPro" id="IPR055190">
    <property type="entry name" value="ATP-synt_VA_C"/>
</dbReference>
<dbReference type="InterPro" id="IPR005722">
    <property type="entry name" value="ATP_synth_F1_bsu"/>
</dbReference>
<dbReference type="InterPro" id="IPR020003">
    <property type="entry name" value="ATPase_a/bsu_AS"/>
</dbReference>
<dbReference type="InterPro" id="IPR050053">
    <property type="entry name" value="ATPase_alpha/beta_chains"/>
</dbReference>
<dbReference type="InterPro" id="IPR004100">
    <property type="entry name" value="ATPase_F1/V1/A1_a/bsu_N"/>
</dbReference>
<dbReference type="InterPro" id="IPR036121">
    <property type="entry name" value="ATPase_F1/V1/A1_a/bsu_N_sf"/>
</dbReference>
<dbReference type="InterPro" id="IPR000194">
    <property type="entry name" value="ATPase_F1/V1/A1_a/bsu_nucl-bd"/>
</dbReference>
<dbReference type="InterPro" id="IPR024034">
    <property type="entry name" value="ATPase_F1/V1_b/a_C"/>
</dbReference>
<dbReference type="InterPro" id="IPR027417">
    <property type="entry name" value="P-loop_NTPase"/>
</dbReference>
<dbReference type="NCBIfam" id="TIGR01039">
    <property type="entry name" value="atpD"/>
    <property type="match status" value="1"/>
</dbReference>
<dbReference type="PANTHER" id="PTHR15184">
    <property type="entry name" value="ATP SYNTHASE"/>
    <property type="match status" value="1"/>
</dbReference>
<dbReference type="PANTHER" id="PTHR15184:SF71">
    <property type="entry name" value="ATP SYNTHASE SUBUNIT BETA, MITOCHONDRIAL"/>
    <property type="match status" value="1"/>
</dbReference>
<dbReference type="Pfam" id="PF00006">
    <property type="entry name" value="ATP-synt_ab"/>
    <property type="match status" value="1"/>
</dbReference>
<dbReference type="Pfam" id="PF02874">
    <property type="entry name" value="ATP-synt_ab_N"/>
    <property type="match status" value="1"/>
</dbReference>
<dbReference type="Pfam" id="PF22919">
    <property type="entry name" value="ATP-synt_VA_C"/>
    <property type="match status" value="1"/>
</dbReference>
<dbReference type="SMART" id="SM00382">
    <property type="entry name" value="AAA"/>
    <property type="match status" value="1"/>
</dbReference>
<dbReference type="SUPFAM" id="SSF47917">
    <property type="entry name" value="C-terminal domain of alpha and beta subunits of F1 ATP synthase"/>
    <property type="match status" value="1"/>
</dbReference>
<dbReference type="SUPFAM" id="SSF50615">
    <property type="entry name" value="N-terminal domain of alpha and beta subunits of F1 ATP synthase"/>
    <property type="match status" value="1"/>
</dbReference>
<dbReference type="SUPFAM" id="SSF52540">
    <property type="entry name" value="P-loop containing nucleoside triphosphate hydrolases"/>
    <property type="match status" value="1"/>
</dbReference>
<dbReference type="PROSITE" id="PS00152">
    <property type="entry name" value="ATPASE_ALPHA_BETA"/>
    <property type="match status" value="1"/>
</dbReference>
<reference key="1">
    <citation type="journal article" date="2009" name="BMC Genomics">
        <title>Metabolic analysis of the soil microbe Dechloromonas aromatica str. RCB: indications of a surprisingly complex life-style and cryptic anaerobic pathways for aromatic degradation.</title>
        <authorList>
            <person name="Salinero K.K."/>
            <person name="Keller K."/>
            <person name="Feil W.S."/>
            <person name="Feil H."/>
            <person name="Trong S."/>
            <person name="Di Bartolo G."/>
            <person name="Lapidus A."/>
        </authorList>
    </citation>
    <scope>NUCLEOTIDE SEQUENCE [LARGE SCALE GENOMIC DNA]</scope>
    <source>
        <strain>RCB</strain>
    </source>
</reference>
<accession>Q477Z1</accession>
<gene>
    <name evidence="1" type="primary">atpD</name>
    <name type="ordered locus">Daro_4114</name>
</gene>
<evidence type="ECO:0000255" key="1">
    <source>
        <dbReference type="HAMAP-Rule" id="MF_01347"/>
    </source>
</evidence>